<proteinExistence type="evidence at protein level"/>
<reference key="1">
    <citation type="journal article" date="2003" name="Science">
        <title>Role of mobile DNA in the evolution of vancomycin-resistant Enterococcus faecalis.</title>
        <authorList>
            <person name="Paulsen I.T."/>
            <person name="Banerjei L."/>
            <person name="Myers G.S.A."/>
            <person name="Nelson K.E."/>
            <person name="Seshadri R."/>
            <person name="Read T.D."/>
            <person name="Fouts D.E."/>
            <person name="Eisen J.A."/>
            <person name="Gill S.R."/>
            <person name="Heidelberg J.F."/>
            <person name="Tettelin H."/>
            <person name="Dodson R.J."/>
            <person name="Umayam L.A."/>
            <person name="Brinkac L.M."/>
            <person name="Beanan M.J."/>
            <person name="Daugherty S.C."/>
            <person name="DeBoy R.T."/>
            <person name="Durkin S.A."/>
            <person name="Kolonay J.F."/>
            <person name="Madupu R."/>
            <person name="Nelson W.C."/>
            <person name="Vamathevan J.J."/>
            <person name="Tran B."/>
            <person name="Upton J."/>
            <person name="Hansen T."/>
            <person name="Shetty J."/>
            <person name="Khouri H.M."/>
            <person name="Utterback T.R."/>
            <person name="Radune D."/>
            <person name="Ketchum K.A."/>
            <person name="Dougherty B.A."/>
            <person name="Fraser C.M."/>
        </authorList>
    </citation>
    <scope>NUCLEOTIDE SEQUENCE [LARGE SCALE GENOMIC DNA]</scope>
    <source>
        <strain>ATCC 700802 / V583</strain>
    </source>
</reference>
<sequence>MSRIGNKVVVLPAGVEIKQDGNNITVKGPKGELTREFSSDIKMNIEGNEVTFIRPNDSKEMKTIHGTTRANFNNMVVGVSEGFQKALELIGVGYRAQVQGNKLTLNVGYSHPVEMTAPEGVTFEVPANTQVIVKGINKEVVGELAANIRGVRPPEPYKGKGIRYVGEFVRRKEGKTGK</sequence>
<feature type="chain" id="PRO_0000260865" description="Large ribosomal subunit protein uL6">
    <location>
        <begin position="1"/>
        <end position="178"/>
    </location>
</feature>
<feature type="turn" evidence="3">
    <location>
        <begin position="4"/>
        <end position="6"/>
    </location>
</feature>
<feature type="strand" evidence="3">
    <location>
        <begin position="16"/>
        <end position="20"/>
    </location>
</feature>
<feature type="strand" evidence="3">
    <location>
        <begin position="23"/>
        <end position="27"/>
    </location>
</feature>
<feature type="strand" evidence="3">
    <location>
        <begin position="39"/>
        <end position="41"/>
    </location>
</feature>
<feature type="strand" evidence="3">
    <location>
        <begin position="46"/>
        <end position="48"/>
    </location>
</feature>
<feature type="strand" evidence="3">
    <location>
        <begin position="59"/>
        <end position="62"/>
    </location>
</feature>
<feature type="helix" evidence="3">
    <location>
        <begin position="63"/>
        <end position="80"/>
    </location>
</feature>
<feature type="strand" evidence="3">
    <location>
        <begin position="83"/>
        <end position="87"/>
    </location>
</feature>
<feature type="strand" evidence="3">
    <location>
        <begin position="95"/>
        <end position="99"/>
    </location>
</feature>
<feature type="strand" evidence="3">
    <location>
        <begin position="102"/>
        <end position="111"/>
    </location>
</feature>
<feature type="strand" evidence="3">
    <location>
        <begin position="113"/>
        <end position="116"/>
    </location>
</feature>
<feature type="strand" evidence="3">
    <location>
        <begin position="127"/>
        <end position="129"/>
    </location>
</feature>
<feature type="strand" evidence="3">
    <location>
        <begin position="131"/>
        <end position="136"/>
    </location>
</feature>
<feature type="helix" evidence="3">
    <location>
        <begin position="138"/>
        <end position="148"/>
    </location>
</feature>
<feature type="strand" evidence="3">
    <location>
        <begin position="156"/>
        <end position="158"/>
    </location>
</feature>
<evidence type="ECO:0000255" key="1">
    <source>
        <dbReference type="HAMAP-Rule" id="MF_01365"/>
    </source>
</evidence>
<evidence type="ECO:0000305" key="2"/>
<evidence type="ECO:0007829" key="3">
    <source>
        <dbReference type="PDB" id="6WU9"/>
    </source>
</evidence>
<comment type="function">
    <text evidence="1">This protein binds to the 23S rRNA, and is important in its secondary structure. It is located near the subunit interface in the base of the L7/L12 stalk, and near the tRNA binding site of the peptidyltransferase center.</text>
</comment>
<comment type="subunit">
    <text evidence="1">Part of the 50S ribosomal subunit.</text>
</comment>
<comment type="similarity">
    <text evidence="1">Belongs to the universal ribosomal protein uL6 family.</text>
</comment>
<dbReference type="EMBL" id="AE016830">
    <property type="protein sequence ID" value="AAO80090.1"/>
    <property type="molecule type" value="Genomic_DNA"/>
</dbReference>
<dbReference type="RefSeq" id="NP_814019.1">
    <property type="nucleotide sequence ID" value="NC_004668.1"/>
</dbReference>
<dbReference type="RefSeq" id="WP_002379228.1">
    <property type="nucleotide sequence ID" value="NZ_KE136524.1"/>
</dbReference>
<dbReference type="PDB" id="6WU9">
    <property type="method" value="EM"/>
    <property type="resolution" value="2.90 A"/>
    <property type="chains" value="G=2-177"/>
</dbReference>
<dbReference type="PDB" id="7P7Q">
    <property type="method" value="EM"/>
    <property type="resolution" value="2.40 A"/>
    <property type="chains" value="K=1-178"/>
</dbReference>
<dbReference type="PDB" id="7P7R">
    <property type="method" value="EM"/>
    <property type="resolution" value="2.90 A"/>
    <property type="chains" value="K=1-178"/>
</dbReference>
<dbReference type="PDB" id="7P7S">
    <property type="method" value="EM"/>
    <property type="resolution" value="3.00 A"/>
    <property type="chains" value="K=1-178"/>
</dbReference>
<dbReference type="PDB" id="7P7T">
    <property type="method" value="EM"/>
    <property type="resolution" value="2.90 A"/>
    <property type="chains" value="K=1-178"/>
</dbReference>
<dbReference type="PDB" id="7P7U">
    <property type="method" value="EM"/>
    <property type="resolution" value="3.10 A"/>
    <property type="chains" value="K=1-178"/>
</dbReference>
<dbReference type="PDBsum" id="6WU9"/>
<dbReference type="PDBsum" id="7P7Q"/>
<dbReference type="PDBsum" id="7P7R"/>
<dbReference type="PDBsum" id="7P7S"/>
<dbReference type="PDBsum" id="7P7T"/>
<dbReference type="PDBsum" id="7P7U"/>
<dbReference type="EMDB" id="EMD-13241"/>
<dbReference type="EMDB" id="EMD-13242"/>
<dbReference type="EMDB" id="EMD-13243"/>
<dbReference type="EMDB" id="EMD-13244"/>
<dbReference type="EMDB" id="EMD-13245"/>
<dbReference type="SMR" id="Q839E9"/>
<dbReference type="STRING" id="226185.EF_0221"/>
<dbReference type="EnsemblBacteria" id="AAO80090">
    <property type="protein sequence ID" value="AAO80090"/>
    <property type="gene ID" value="EF_0221"/>
</dbReference>
<dbReference type="KEGG" id="efa:EF0221"/>
<dbReference type="PATRIC" id="fig|226185.45.peg.45"/>
<dbReference type="eggNOG" id="COG0097">
    <property type="taxonomic scope" value="Bacteria"/>
</dbReference>
<dbReference type="HOGENOM" id="CLU_065464_1_2_9"/>
<dbReference type="Proteomes" id="UP000001415">
    <property type="component" value="Chromosome"/>
</dbReference>
<dbReference type="GO" id="GO:0022625">
    <property type="term" value="C:cytosolic large ribosomal subunit"/>
    <property type="evidence" value="ECO:0007669"/>
    <property type="project" value="TreeGrafter"/>
</dbReference>
<dbReference type="GO" id="GO:0019843">
    <property type="term" value="F:rRNA binding"/>
    <property type="evidence" value="ECO:0007669"/>
    <property type="project" value="UniProtKB-UniRule"/>
</dbReference>
<dbReference type="GO" id="GO:0003735">
    <property type="term" value="F:structural constituent of ribosome"/>
    <property type="evidence" value="ECO:0007669"/>
    <property type="project" value="InterPro"/>
</dbReference>
<dbReference type="GO" id="GO:0002181">
    <property type="term" value="P:cytoplasmic translation"/>
    <property type="evidence" value="ECO:0007669"/>
    <property type="project" value="TreeGrafter"/>
</dbReference>
<dbReference type="FunFam" id="3.90.930.12:FF:000001">
    <property type="entry name" value="50S ribosomal protein L6"/>
    <property type="match status" value="1"/>
</dbReference>
<dbReference type="FunFam" id="3.90.930.12:FF:000002">
    <property type="entry name" value="50S ribosomal protein L6"/>
    <property type="match status" value="1"/>
</dbReference>
<dbReference type="Gene3D" id="3.90.930.12">
    <property type="entry name" value="Ribosomal protein L6, alpha-beta domain"/>
    <property type="match status" value="2"/>
</dbReference>
<dbReference type="HAMAP" id="MF_01365_B">
    <property type="entry name" value="Ribosomal_uL6_B"/>
    <property type="match status" value="1"/>
</dbReference>
<dbReference type="InterPro" id="IPR000702">
    <property type="entry name" value="Ribosomal_uL6-like"/>
</dbReference>
<dbReference type="InterPro" id="IPR036789">
    <property type="entry name" value="Ribosomal_uL6-like_a/b-dom_sf"/>
</dbReference>
<dbReference type="InterPro" id="IPR020040">
    <property type="entry name" value="Ribosomal_uL6_a/b-dom"/>
</dbReference>
<dbReference type="InterPro" id="IPR019906">
    <property type="entry name" value="Ribosomal_uL6_bac-type"/>
</dbReference>
<dbReference type="InterPro" id="IPR002358">
    <property type="entry name" value="Ribosomal_uL6_CS"/>
</dbReference>
<dbReference type="NCBIfam" id="TIGR03654">
    <property type="entry name" value="L6_bact"/>
    <property type="match status" value="1"/>
</dbReference>
<dbReference type="PANTHER" id="PTHR11655">
    <property type="entry name" value="60S/50S RIBOSOMAL PROTEIN L6/L9"/>
    <property type="match status" value="1"/>
</dbReference>
<dbReference type="PANTHER" id="PTHR11655:SF14">
    <property type="entry name" value="LARGE RIBOSOMAL SUBUNIT PROTEIN UL6M"/>
    <property type="match status" value="1"/>
</dbReference>
<dbReference type="Pfam" id="PF00347">
    <property type="entry name" value="Ribosomal_L6"/>
    <property type="match status" value="2"/>
</dbReference>
<dbReference type="PIRSF" id="PIRSF002162">
    <property type="entry name" value="Ribosomal_L6"/>
    <property type="match status" value="1"/>
</dbReference>
<dbReference type="PRINTS" id="PR00059">
    <property type="entry name" value="RIBOSOMALL6"/>
</dbReference>
<dbReference type="SUPFAM" id="SSF56053">
    <property type="entry name" value="Ribosomal protein L6"/>
    <property type="match status" value="2"/>
</dbReference>
<dbReference type="PROSITE" id="PS00525">
    <property type="entry name" value="RIBOSOMAL_L6_1"/>
    <property type="match status" value="1"/>
</dbReference>
<accession>Q839E9</accession>
<protein>
    <recommendedName>
        <fullName evidence="1">Large ribosomal subunit protein uL6</fullName>
    </recommendedName>
    <alternativeName>
        <fullName evidence="2">50S ribosomal protein L6</fullName>
    </alternativeName>
</protein>
<gene>
    <name evidence="1" type="primary">rplF</name>
    <name type="ordered locus">EF_0221</name>
</gene>
<name>RL6_ENTFA</name>
<organism>
    <name type="scientific">Enterococcus faecalis (strain ATCC 700802 / V583)</name>
    <dbReference type="NCBI Taxonomy" id="226185"/>
    <lineage>
        <taxon>Bacteria</taxon>
        <taxon>Bacillati</taxon>
        <taxon>Bacillota</taxon>
        <taxon>Bacilli</taxon>
        <taxon>Lactobacillales</taxon>
        <taxon>Enterococcaceae</taxon>
        <taxon>Enterococcus</taxon>
    </lineage>
</organism>
<keyword id="KW-0002">3D-structure</keyword>
<keyword id="KW-1185">Reference proteome</keyword>
<keyword id="KW-0687">Ribonucleoprotein</keyword>
<keyword id="KW-0689">Ribosomal protein</keyword>
<keyword id="KW-0694">RNA-binding</keyword>
<keyword id="KW-0699">rRNA-binding</keyword>